<sequence>MATLNELAELIGGEVVGDGSVVLNRMAPIESAGPGDITFVANPKYLAKLKDTTASAVIVKAGIECPGVNLLICANPYLAFAKVLTALHAQRPAPQGVMDGAWVDPSAELGADVTVHPGCVVGKNVRVGRGTILYPGVVLYDDVQVGEDCLVHAGVLVREQCRLGNRVVVQPGAVIGSDGFGFAPDGKSYYKIPQVGIVAIEDDVEVGANVCIDRAAMGVTLIKRGTKIDNLVQIAHNVSIGEDTILVAQVGIAGSSKVGDHCTLGGQVGVSGHLKIGDNTMVGAQSGIISDLPAGQVFSGTPTMPHREWLKASASMRSLPAMRKTVSNLQKRIEELEKLIKER</sequence>
<accession>Q3A555</accession>
<keyword id="KW-0012">Acyltransferase</keyword>
<keyword id="KW-0441">Lipid A biosynthesis</keyword>
<keyword id="KW-0444">Lipid biosynthesis</keyword>
<keyword id="KW-0443">Lipid metabolism</keyword>
<keyword id="KW-1185">Reference proteome</keyword>
<keyword id="KW-0677">Repeat</keyword>
<keyword id="KW-0808">Transferase</keyword>
<comment type="function">
    <text evidence="1">Catalyzes the N-acylation of UDP-3-O-acylglucosamine using 3-hydroxyacyl-ACP as the acyl donor. Is involved in the biosynthesis of lipid A, a phosphorylated glycolipid that anchors the lipopolysaccharide to the outer membrane of the cell.</text>
</comment>
<comment type="catalytic activity">
    <reaction evidence="1">
        <text>a UDP-3-O-[(3R)-3-hydroxyacyl]-alpha-D-glucosamine + a (3R)-hydroxyacyl-[ACP] = a UDP-2-N,3-O-bis[(3R)-3-hydroxyacyl]-alpha-D-glucosamine + holo-[ACP] + H(+)</text>
        <dbReference type="Rhea" id="RHEA:53836"/>
        <dbReference type="Rhea" id="RHEA-COMP:9685"/>
        <dbReference type="Rhea" id="RHEA-COMP:9945"/>
        <dbReference type="ChEBI" id="CHEBI:15378"/>
        <dbReference type="ChEBI" id="CHEBI:64479"/>
        <dbReference type="ChEBI" id="CHEBI:78827"/>
        <dbReference type="ChEBI" id="CHEBI:137740"/>
        <dbReference type="ChEBI" id="CHEBI:137748"/>
        <dbReference type="EC" id="2.3.1.191"/>
    </reaction>
</comment>
<comment type="pathway">
    <text evidence="1">Bacterial outer membrane biogenesis; LPS lipid A biosynthesis.</text>
</comment>
<comment type="subunit">
    <text evidence="1">Homotrimer.</text>
</comment>
<comment type="similarity">
    <text evidence="1">Belongs to the transferase hexapeptide repeat family. LpxD subfamily.</text>
</comment>
<name>LPXD_SYNC1</name>
<dbReference type="EC" id="2.3.1.191" evidence="1"/>
<dbReference type="EMBL" id="CP000142">
    <property type="protein sequence ID" value="ABA88502.1"/>
    <property type="molecule type" value="Genomic_DNA"/>
</dbReference>
<dbReference type="RefSeq" id="WP_011340977.1">
    <property type="nucleotide sequence ID" value="NC_007498.2"/>
</dbReference>
<dbReference type="SMR" id="Q3A555"/>
<dbReference type="STRING" id="338963.Pcar_1253"/>
<dbReference type="KEGG" id="pca:Pcar_1253"/>
<dbReference type="eggNOG" id="COG1044">
    <property type="taxonomic scope" value="Bacteria"/>
</dbReference>
<dbReference type="HOGENOM" id="CLU_049865_0_0_7"/>
<dbReference type="OrthoDB" id="9784739at2"/>
<dbReference type="UniPathway" id="UPA00973"/>
<dbReference type="Proteomes" id="UP000002534">
    <property type="component" value="Chromosome"/>
</dbReference>
<dbReference type="GO" id="GO:0016020">
    <property type="term" value="C:membrane"/>
    <property type="evidence" value="ECO:0007669"/>
    <property type="project" value="GOC"/>
</dbReference>
<dbReference type="GO" id="GO:0016410">
    <property type="term" value="F:N-acyltransferase activity"/>
    <property type="evidence" value="ECO:0007669"/>
    <property type="project" value="InterPro"/>
</dbReference>
<dbReference type="GO" id="GO:0009245">
    <property type="term" value="P:lipid A biosynthetic process"/>
    <property type="evidence" value="ECO:0007669"/>
    <property type="project" value="UniProtKB-UniRule"/>
</dbReference>
<dbReference type="CDD" id="cd03352">
    <property type="entry name" value="LbH_LpxD"/>
    <property type="match status" value="1"/>
</dbReference>
<dbReference type="Gene3D" id="2.160.10.10">
    <property type="entry name" value="Hexapeptide repeat proteins"/>
    <property type="match status" value="1"/>
</dbReference>
<dbReference type="Gene3D" id="3.40.1390.10">
    <property type="entry name" value="MurE/MurF, N-terminal domain"/>
    <property type="match status" value="1"/>
</dbReference>
<dbReference type="HAMAP" id="MF_00523">
    <property type="entry name" value="LpxD"/>
    <property type="match status" value="1"/>
</dbReference>
<dbReference type="InterPro" id="IPR001451">
    <property type="entry name" value="Hexapep"/>
</dbReference>
<dbReference type="InterPro" id="IPR018357">
    <property type="entry name" value="Hexapep_transf_CS"/>
</dbReference>
<dbReference type="InterPro" id="IPR007691">
    <property type="entry name" value="LpxD"/>
</dbReference>
<dbReference type="InterPro" id="IPR011004">
    <property type="entry name" value="Trimer_LpxA-like_sf"/>
</dbReference>
<dbReference type="InterPro" id="IPR020573">
    <property type="entry name" value="UDP_GlcNAc_AcTrfase_non-rep"/>
</dbReference>
<dbReference type="NCBIfam" id="TIGR01853">
    <property type="entry name" value="lipid_A_lpxD"/>
    <property type="match status" value="1"/>
</dbReference>
<dbReference type="NCBIfam" id="NF002060">
    <property type="entry name" value="PRK00892.1"/>
    <property type="match status" value="1"/>
</dbReference>
<dbReference type="PANTHER" id="PTHR43378">
    <property type="entry name" value="UDP-3-O-ACYLGLUCOSAMINE N-ACYLTRANSFERASE"/>
    <property type="match status" value="1"/>
</dbReference>
<dbReference type="PANTHER" id="PTHR43378:SF2">
    <property type="entry name" value="UDP-3-O-ACYLGLUCOSAMINE N-ACYLTRANSFERASE 1, MITOCHONDRIAL-RELATED"/>
    <property type="match status" value="1"/>
</dbReference>
<dbReference type="Pfam" id="PF00132">
    <property type="entry name" value="Hexapep"/>
    <property type="match status" value="2"/>
</dbReference>
<dbReference type="Pfam" id="PF14602">
    <property type="entry name" value="Hexapep_2"/>
    <property type="match status" value="1"/>
</dbReference>
<dbReference type="Pfam" id="PF04613">
    <property type="entry name" value="LpxD"/>
    <property type="match status" value="1"/>
</dbReference>
<dbReference type="SUPFAM" id="SSF51161">
    <property type="entry name" value="Trimeric LpxA-like enzymes"/>
    <property type="match status" value="1"/>
</dbReference>
<dbReference type="PROSITE" id="PS00101">
    <property type="entry name" value="HEXAPEP_TRANSFERASES"/>
    <property type="match status" value="2"/>
</dbReference>
<protein>
    <recommendedName>
        <fullName evidence="1">UDP-3-O-acylglucosamine N-acyltransferase</fullName>
        <ecNumber evidence="1">2.3.1.191</ecNumber>
    </recommendedName>
</protein>
<evidence type="ECO:0000255" key="1">
    <source>
        <dbReference type="HAMAP-Rule" id="MF_00523"/>
    </source>
</evidence>
<gene>
    <name evidence="1" type="primary">lpxD</name>
    <name type="ordered locus">Pcar_1253</name>
</gene>
<organism>
    <name type="scientific">Syntrophotalea carbinolica (strain DSM 2380 / NBRC 103641 / GraBd1)</name>
    <name type="common">Pelobacter carbinolicus</name>
    <dbReference type="NCBI Taxonomy" id="338963"/>
    <lineage>
        <taxon>Bacteria</taxon>
        <taxon>Pseudomonadati</taxon>
        <taxon>Thermodesulfobacteriota</taxon>
        <taxon>Desulfuromonadia</taxon>
        <taxon>Desulfuromonadales</taxon>
        <taxon>Syntrophotaleaceae</taxon>
        <taxon>Syntrophotalea</taxon>
    </lineage>
</organism>
<reference key="1">
    <citation type="submission" date="2005-10" db="EMBL/GenBank/DDBJ databases">
        <title>Complete sequence of Pelobacter carbinolicus DSM 2380.</title>
        <authorList>
            <person name="Copeland A."/>
            <person name="Lucas S."/>
            <person name="Lapidus A."/>
            <person name="Barry K."/>
            <person name="Detter J.C."/>
            <person name="Glavina T."/>
            <person name="Hammon N."/>
            <person name="Israni S."/>
            <person name="Pitluck S."/>
            <person name="Chertkov O."/>
            <person name="Schmutz J."/>
            <person name="Larimer F."/>
            <person name="Land M."/>
            <person name="Kyrpides N."/>
            <person name="Ivanova N."/>
            <person name="Richardson P."/>
        </authorList>
    </citation>
    <scope>NUCLEOTIDE SEQUENCE [LARGE SCALE GENOMIC DNA]</scope>
    <source>
        <strain>DSM 2380 / NBRC 103641 / GraBd1</strain>
    </source>
</reference>
<feature type="chain" id="PRO_0000264403" description="UDP-3-O-acylglucosamine N-acyltransferase">
    <location>
        <begin position="1"/>
        <end position="343"/>
    </location>
</feature>
<feature type="active site" description="Proton acceptor" evidence="1">
    <location>
        <position position="236"/>
    </location>
</feature>
<proteinExistence type="inferred from homology"/>